<name>PO11_POPJA</name>
<dbReference type="EC" id="2.7.7.49"/>
<dbReference type="EMBL" id="L00944">
    <property type="protein sequence ID" value="AAA29783.1"/>
    <property type="molecule type" value="Genomic_DNA"/>
</dbReference>
<dbReference type="PIR" id="F44490">
    <property type="entry name" value="F44490"/>
</dbReference>
<dbReference type="SMR" id="Q03276"/>
<dbReference type="GO" id="GO:0004519">
    <property type="term" value="F:endonuclease activity"/>
    <property type="evidence" value="ECO:0007669"/>
    <property type="project" value="UniProtKB-KW"/>
</dbReference>
<dbReference type="GO" id="GO:0003676">
    <property type="term" value="F:nucleic acid binding"/>
    <property type="evidence" value="ECO:0007669"/>
    <property type="project" value="InterPro"/>
</dbReference>
<dbReference type="GO" id="GO:0003964">
    <property type="term" value="F:RNA-directed DNA polymerase activity"/>
    <property type="evidence" value="ECO:0007669"/>
    <property type="project" value="UniProtKB-KW"/>
</dbReference>
<dbReference type="Gene3D" id="3.30.420.10">
    <property type="entry name" value="Ribonuclease H-like superfamily/Ribonuclease H"/>
    <property type="match status" value="1"/>
</dbReference>
<dbReference type="InterPro" id="IPR012337">
    <property type="entry name" value="RNaseH-like_sf"/>
</dbReference>
<dbReference type="InterPro" id="IPR036397">
    <property type="entry name" value="RNaseH_sf"/>
</dbReference>
<dbReference type="SUPFAM" id="SSF53098">
    <property type="entry name" value="Ribonuclease H-like"/>
    <property type="match status" value="1"/>
</dbReference>
<sequence>LKDGTGIVAAELVAIEKGCEELLSRRKSGWIVTDSEGAIGALRKWKSEDRVTQDIKRAIWQGEREAIDITIRIRGPKTETQEADRAAKKARDRPQVDLETYCNKAEVRQKFREKELTKWQSEWGKRNHRREHIGFPAVTDEWPGLNERAVQLVTGHGYFKAYYRRFKLREGSGLCECGEAEETADHVWWECTVEERERARREFTEAVGTRADVRQKLSEVHRDRLISELNKLADAIVRDDSNLEQ</sequence>
<comment type="catalytic activity">
    <reaction>
        <text>DNA(n) + a 2'-deoxyribonucleoside 5'-triphosphate = DNA(n+1) + diphosphate</text>
        <dbReference type="Rhea" id="RHEA:22508"/>
        <dbReference type="Rhea" id="RHEA-COMP:17339"/>
        <dbReference type="Rhea" id="RHEA-COMP:17340"/>
        <dbReference type="ChEBI" id="CHEBI:33019"/>
        <dbReference type="ChEBI" id="CHEBI:61560"/>
        <dbReference type="ChEBI" id="CHEBI:173112"/>
        <dbReference type="EC" id="2.7.7.49"/>
    </reaction>
</comment>
<accession>Q03276</accession>
<organism>
    <name type="scientific">Popillia japonica</name>
    <name type="common">Japanese beetle</name>
    <dbReference type="NCBI Taxonomy" id="7064"/>
    <lineage>
        <taxon>Eukaryota</taxon>
        <taxon>Metazoa</taxon>
        <taxon>Ecdysozoa</taxon>
        <taxon>Arthropoda</taxon>
        <taxon>Hexapoda</taxon>
        <taxon>Insecta</taxon>
        <taxon>Pterygota</taxon>
        <taxon>Neoptera</taxon>
        <taxon>Endopterygota</taxon>
        <taxon>Coleoptera</taxon>
        <taxon>Polyphaga</taxon>
        <taxon>Scarabaeiformia</taxon>
        <taxon>Scarabaeidae</taxon>
        <taxon>Rutelinae</taxon>
        <taxon>Popillia</taxon>
    </lineage>
</organism>
<proteinExistence type="predicted"/>
<keyword id="KW-0255">Endonuclease</keyword>
<keyword id="KW-0378">Hydrolase</keyword>
<keyword id="KW-0540">Nuclease</keyword>
<keyword id="KW-0548">Nucleotidyltransferase</keyword>
<keyword id="KW-0695">RNA-directed DNA polymerase</keyword>
<keyword id="KW-0808">Transferase</keyword>
<keyword id="KW-0814">Transposable element</keyword>
<reference key="1">
    <citation type="journal article" date="1993" name="Mol. Biol. Evol.">
        <title>Sequence relationship of retrotransposable elements R1 and R2 within and between divergent insect species.</title>
        <authorList>
            <person name="Burke W.D."/>
            <person name="Eickbush D.G."/>
            <person name="Xiong Y."/>
            <person name="Jakubczak J.L."/>
            <person name="Eickbush T.H."/>
        </authorList>
    </citation>
    <scope>NUCLEOTIDE SEQUENCE [GENOMIC DNA]</scope>
</reference>
<reference key="2">
    <citation type="journal article" date="1991" name="Proc. Natl. Acad. Sci. U.S.A.">
        <title>Retrotransposable elements R1 and R2 interrupt the rRNA genes of most insects.</title>
        <authorList>
            <person name="Jakubczak J.L."/>
            <person name="Burke W.D."/>
            <person name="Eickbush T.H."/>
        </authorList>
    </citation>
    <scope>NUCLEOTIDE SEQUENCE [GENOMIC DNA] OF 175-191</scope>
</reference>
<feature type="chain" id="PRO_0000058492" description="Retrovirus-related Pol polyprotein from type-1 retrotransposable element R1">
    <location>
        <begin position="1" status="less than"/>
        <end position="245"/>
    </location>
</feature>
<feature type="domain" description="Reverse transcriptase">
    <location>
        <begin position="1" status="less than"/>
        <end position="105"/>
    </location>
</feature>
<feature type="region of interest" description="Nucleic acid-binding endonuclease">
    <location>
        <begin position="106"/>
        <end position="245"/>
    </location>
</feature>
<feature type="non-terminal residue">
    <location>
        <position position="1"/>
    </location>
</feature>
<protein>
    <recommendedName>
        <fullName>Retrovirus-related Pol polyprotein from type-1 retrotransposable element R1</fullName>
    </recommendedName>
    <alternativeName>
        <fullName>Retrovirus-related Pol polyprotein from type I retrotransposable element R1</fullName>
    </alternativeName>
    <domain>
        <recommendedName>
            <fullName>Reverse transcriptase</fullName>
            <ecNumber>2.7.7.49</ecNumber>
        </recommendedName>
    </domain>
    <domain>
        <recommendedName>
            <fullName>Endonuclease</fullName>
        </recommendedName>
    </domain>
</protein>